<protein>
    <recommendedName>
        <fullName evidence="1">Cysteine--tRNA ligase</fullName>
        <ecNumber evidence="1">6.1.1.16</ecNumber>
    </recommendedName>
    <alternativeName>
        <fullName evidence="1">Cysteinyl-tRNA synthetase</fullName>
        <shortName evidence="1">CysRS</shortName>
    </alternativeName>
</protein>
<evidence type="ECO:0000255" key="1">
    <source>
        <dbReference type="HAMAP-Rule" id="MF_00041"/>
    </source>
</evidence>
<feature type="chain" id="PRO_0000159396" description="Cysteine--tRNA ligase">
    <location>
        <begin position="1"/>
        <end position="461"/>
    </location>
</feature>
<feature type="short sequence motif" description="'HIGH' region">
    <location>
        <begin position="30"/>
        <end position="40"/>
    </location>
</feature>
<feature type="short sequence motif" description="'KMSKS' region">
    <location>
        <begin position="266"/>
        <end position="270"/>
    </location>
</feature>
<feature type="binding site" evidence="1">
    <location>
        <position position="28"/>
    </location>
    <ligand>
        <name>Zn(2+)</name>
        <dbReference type="ChEBI" id="CHEBI:29105"/>
    </ligand>
</feature>
<feature type="binding site" evidence="1">
    <location>
        <position position="209"/>
    </location>
    <ligand>
        <name>Zn(2+)</name>
        <dbReference type="ChEBI" id="CHEBI:29105"/>
    </ligand>
</feature>
<feature type="binding site" evidence="1">
    <location>
        <position position="234"/>
    </location>
    <ligand>
        <name>Zn(2+)</name>
        <dbReference type="ChEBI" id="CHEBI:29105"/>
    </ligand>
</feature>
<feature type="binding site" evidence="1">
    <location>
        <position position="238"/>
    </location>
    <ligand>
        <name>Zn(2+)</name>
        <dbReference type="ChEBI" id="CHEBI:29105"/>
    </ligand>
</feature>
<feature type="binding site" evidence="1">
    <location>
        <position position="269"/>
    </location>
    <ligand>
        <name>ATP</name>
        <dbReference type="ChEBI" id="CHEBI:30616"/>
    </ligand>
</feature>
<reference key="1">
    <citation type="journal article" date="2001" name="Nature">
        <title>Genome sequence of enterohaemorrhagic Escherichia coli O157:H7.</title>
        <authorList>
            <person name="Perna N.T."/>
            <person name="Plunkett G. III"/>
            <person name="Burland V."/>
            <person name="Mau B."/>
            <person name="Glasner J.D."/>
            <person name="Rose D.J."/>
            <person name="Mayhew G.F."/>
            <person name="Evans P.S."/>
            <person name="Gregor J."/>
            <person name="Kirkpatrick H.A."/>
            <person name="Posfai G."/>
            <person name="Hackett J."/>
            <person name="Klink S."/>
            <person name="Boutin A."/>
            <person name="Shao Y."/>
            <person name="Miller L."/>
            <person name="Grotbeck E.J."/>
            <person name="Davis N.W."/>
            <person name="Lim A."/>
            <person name="Dimalanta E.T."/>
            <person name="Potamousis K."/>
            <person name="Apodaca J."/>
            <person name="Anantharaman T.S."/>
            <person name="Lin J."/>
            <person name="Yen G."/>
            <person name="Schwartz D.C."/>
            <person name="Welch R.A."/>
            <person name="Blattner F.R."/>
        </authorList>
    </citation>
    <scope>NUCLEOTIDE SEQUENCE [LARGE SCALE GENOMIC DNA]</scope>
    <source>
        <strain>O157:H7 / EDL933 / ATCC 700927 / EHEC</strain>
    </source>
</reference>
<reference key="2">
    <citation type="journal article" date="2001" name="DNA Res.">
        <title>Complete genome sequence of enterohemorrhagic Escherichia coli O157:H7 and genomic comparison with a laboratory strain K-12.</title>
        <authorList>
            <person name="Hayashi T."/>
            <person name="Makino K."/>
            <person name="Ohnishi M."/>
            <person name="Kurokawa K."/>
            <person name="Ishii K."/>
            <person name="Yokoyama K."/>
            <person name="Han C.-G."/>
            <person name="Ohtsubo E."/>
            <person name="Nakayama K."/>
            <person name="Murata T."/>
            <person name="Tanaka M."/>
            <person name="Tobe T."/>
            <person name="Iida T."/>
            <person name="Takami H."/>
            <person name="Honda T."/>
            <person name="Sasakawa C."/>
            <person name="Ogasawara N."/>
            <person name="Yasunaga T."/>
            <person name="Kuhara S."/>
            <person name="Shiba T."/>
            <person name="Hattori M."/>
            <person name="Shinagawa H."/>
        </authorList>
    </citation>
    <scope>NUCLEOTIDE SEQUENCE [LARGE SCALE GENOMIC DNA]</scope>
    <source>
        <strain>O157:H7 / Sakai / RIMD 0509952 / EHEC</strain>
    </source>
</reference>
<sequence>MLKIFNTLTRQKEEFKPIHAGEVGMYVCGITVYDLCHIGHGRTFVAFDVVARYLRFLGYKLKYVRNITDIDDKIIKRANENGESFVALVDRMIAEMHKDFDALNILRPDMEPRATHHIAEIIELTEQLIAKGHAYVADNGDVMFDVPTDPTYGVLSRQDLDQLQAGARVDVVDDKRNPMDFVLWKMSKEGEPSWPSPWGAGRPGWHIECSAMNCKQLGNHFDIHGGGSDLMFPHHENEIAQSTCAHDGQYVNYWMHSGMVMVDREKMSKSLGNFFTVRDVLKYYDAETVRYFLMSGHYRSQLNYSEENLKQARAALERLYTALRGTDKTVAPAGGEAFEARFIEAMDDDFNTPEAYSVLFDMAREVNRLKVEDMAAANAMASHLRKLSAVLGLLEQEPEAFLQSGAQADDSEVAEIEALIQQRLDARKAKDWAAADAARDRLNEMGIVLEDGPQGTTWRRK</sequence>
<name>SYC_ECO57</name>
<keyword id="KW-0030">Aminoacyl-tRNA synthetase</keyword>
<keyword id="KW-0067">ATP-binding</keyword>
<keyword id="KW-0963">Cytoplasm</keyword>
<keyword id="KW-0436">Ligase</keyword>
<keyword id="KW-0479">Metal-binding</keyword>
<keyword id="KW-0547">Nucleotide-binding</keyword>
<keyword id="KW-0648">Protein biosynthesis</keyword>
<keyword id="KW-1185">Reference proteome</keyword>
<keyword id="KW-0862">Zinc</keyword>
<comment type="catalytic activity">
    <reaction evidence="1">
        <text>tRNA(Cys) + L-cysteine + ATP = L-cysteinyl-tRNA(Cys) + AMP + diphosphate</text>
        <dbReference type="Rhea" id="RHEA:17773"/>
        <dbReference type="Rhea" id="RHEA-COMP:9661"/>
        <dbReference type="Rhea" id="RHEA-COMP:9679"/>
        <dbReference type="ChEBI" id="CHEBI:30616"/>
        <dbReference type="ChEBI" id="CHEBI:33019"/>
        <dbReference type="ChEBI" id="CHEBI:35235"/>
        <dbReference type="ChEBI" id="CHEBI:78442"/>
        <dbReference type="ChEBI" id="CHEBI:78517"/>
        <dbReference type="ChEBI" id="CHEBI:456215"/>
        <dbReference type="EC" id="6.1.1.16"/>
    </reaction>
</comment>
<comment type="cofactor">
    <cofactor evidence="1">
        <name>Zn(2+)</name>
        <dbReference type="ChEBI" id="CHEBI:29105"/>
    </cofactor>
    <text evidence="1">Binds 1 zinc ion per subunit.</text>
</comment>
<comment type="subunit">
    <text evidence="1">Monomer.</text>
</comment>
<comment type="subcellular location">
    <subcellularLocation>
        <location evidence="1">Cytoplasm</location>
    </subcellularLocation>
</comment>
<comment type="similarity">
    <text evidence="1">Belongs to the class-I aminoacyl-tRNA synthetase family.</text>
</comment>
<proteinExistence type="inferred from homology"/>
<gene>
    <name evidence="1" type="primary">cysS</name>
    <name type="ordered locus">Z0681</name>
    <name type="ordered locus">ECs0588</name>
</gene>
<accession>Q8XCT9</accession>
<dbReference type="EC" id="6.1.1.16" evidence="1"/>
<dbReference type="EMBL" id="AE005174">
    <property type="protein sequence ID" value="AAG54883.1"/>
    <property type="molecule type" value="Genomic_DNA"/>
</dbReference>
<dbReference type="EMBL" id="BA000007">
    <property type="protein sequence ID" value="BAB34011.1"/>
    <property type="molecule type" value="Genomic_DNA"/>
</dbReference>
<dbReference type="PIR" id="D90702">
    <property type="entry name" value="D90702"/>
</dbReference>
<dbReference type="PIR" id="G85552">
    <property type="entry name" value="G85552"/>
</dbReference>
<dbReference type="RefSeq" id="NP_308615.1">
    <property type="nucleotide sequence ID" value="NC_002695.1"/>
</dbReference>
<dbReference type="RefSeq" id="WP_000912351.1">
    <property type="nucleotide sequence ID" value="NZ_VOAI01000030.1"/>
</dbReference>
<dbReference type="SMR" id="Q8XCT9"/>
<dbReference type="STRING" id="155864.Z0681"/>
<dbReference type="GeneID" id="916943"/>
<dbReference type="KEGG" id="ece:Z0681"/>
<dbReference type="KEGG" id="ecs:ECs_0588"/>
<dbReference type="PATRIC" id="fig|386585.9.peg.695"/>
<dbReference type="eggNOG" id="COG0215">
    <property type="taxonomic scope" value="Bacteria"/>
</dbReference>
<dbReference type="HOGENOM" id="CLU_013528_0_1_6"/>
<dbReference type="OMA" id="IMRWPSP"/>
<dbReference type="SABIO-RK" id="Q8XCT9"/>
<dbReference type="Proteomes" id="UP000000558">
    <property type="component" value="Chromosome"/>
</dbReference>
<dbReference type="Proteomes" id="UP000002519">
    <property type="component" value="Chromosome"/>
</dbReference>
<dbReference type="GO" id="GO:0005829">
    <property type="term" value="C:cytosol"/>
    <property type="evidence" value="ECO:0007669"/>
    <property type="project" value="TreeGrafter"/>
</dbReference>
<dbReference type="GO" id="GO:0005524">
    <property type="term" value="F:ATP binding"/>
    <property type="evidence" value="ECO:0007669"/>
    <property type="project" value="UniProtKB-UniRule"/>
</dbReference>
<dbReference type="GO" id="GO:0004817">
    <property type="term" value="F:cysteine-tRNA ligase activity"/>
    <property type="evidence" value="ECO:0007669"/>
    <property type="project" value="UniProtKB-UniRule"/>
</dbReference>
<dbReference type="GO" id="GO:0008270">
    <property type="term" value="F:zinc ion binding"/>
    <property type="evidence" value="ECO:0007669"/>
    <property type="project" value="UniProtKB-UniRule"/>
</dbReference>
<dbReference type="GO" id="GO:0006423">
    <property type="term" value="P:cysteinyl-tRNA aminoacylation"/>
    <property type="evidence" value="ECO:0007669"/>
    <property type="project" value="UniProtKB-UniRule"/>
</dbReference>
<dbReference type="CDD" id="cd07963">
    <property type="entry name" value="Anticodon_Ia_Cys"/>
    <property type="match status" value="1"/>
</dbReference>
<dbReference type="CDD" id="cd00672">
    <property type="entry name" value="CysRS_core"/>
    <property type="match status" value="1"/>
</dbReference>
<dbReference type="FunFam" id="1.20.120.1910:FF:000001">
    <property type="entry name" value="Cysteine--tRNA ligase"/>
    <property type="match status" value="1"/>
</dbReference>
<dbReference type="FunFam" id="3.40.50.620:FF:000009">
    <property type="entry name" value="Cysteine--tRNA ligase"/>
    <property type="match status" value="1"/>
</dbReference>
<dbReference type="Gene3D" id="1.20.120.1910">
    <property type="entry name" value="Cysteine-tRNA ligase, C-terminal anti-codon recognition domain"/>
    <property type="match status" value="1"/>
</dbReference>
<dbReference type="Gene3D" id="3.40.50.620">
    <property type="entry name" value="HUPs"/>
    <property type="match status" value="1"/>
</dbReference>
<dbReference type="HAMAP" id="MF_00041">
    <property type="entry name" value="Cys_tRNA_synth"/>
    <property type="match status" value="1"/>
</dbReference>
<dbReference type="InterPro" id="IPR015803">
    <property type="entry name" value="Cys-tRNA-ligase"/>
</dbReference>
<dbReference type="InterPro" id="IPR015273">
    <property type="entry name" value="Cys-tRNA-synt_Ia_DALR"/>
</dbReference>
<dbReference type="InterPro" id="IPR024909">
    <property type="entry name" value="Cys-tRNA/MSH_ligase"/>
</dbReference>
<dbReference type="InterPro" id="IPR056411">
    <property type="entry name" value="CysS_C"/>
</dbReference>
<dbReference type="InterPro" id="IPR014729">
    <property type="entry name" value="Rossmann-like_a/b/a_fold"/>
</dbReference>
<dbReference type="InterPro" id="IPR032678">
    <property type="entry name" value="tRNA-synt_1_cat_dom"/>
</dbReference>
<dbReference type="InterPro" id="IPR009080">
    <property type="entry name" value="tRNAsynth_Ia_anticodon-bd"/>
</dbReference>
<dbReference type="NCBIfam" id="TIGR00435">
    <property type="entry name" value="cysS"/>
    <property type="match status" value="1"/>
</dbReference>
<dbReference type="PANTHER" id="PTHR10890:SF3">
    <property type="entry name" value="CYSTEINE--TRNA LIGASE, CYTOPLASMIC"/>
    <property type="match status" value="1"/>
</dbReference>
<dbReference type="PANTHER" id="PTHR10890">
    <property type="entry name" value="CYSTEINYL-TRNA SYNTHETASE"/>
    <property type="match status" value="1"/>
</dbReference>
<dbReference type="Pfam" id="PF23493">
    <property type="entry name" value="CysS_C"/>
    <property type="match status" value="1"/>
</dbReference>
<dbReference type="Pfam" id="PF09190">
    <property type="entry name" value="DALR_2"/>
    <property type="match status" value="1"/>
</dbReference>
<dbReference type="Pfam" id="PF01406">
    <property type="entry name" value="tRNA-synt_1e"/>
    <property type="match status" value="1"/>
</dbReference>
<dbReference type="PRINTS" id="PR00983">
    <property type="entry name" value="TRNASYNTHCYS"/>
</dbReference>
<dbReference type="SMART" id="SM00840">
    <property type="entry name" value="DALR_2"/>
    <property type="match status" value="1"/>
</dbReference>
<dbReference type="SUPFAM" id="SSF47323">
    <property type="entry name" value="Anticodon-binding domain of a subclass of class I aminoacyl-tRNA synthetases"/>
    <property type="match status" value="1"/>
</dbReference>
<dbReference type="SUPFAM" id="SSF52374">
    <property type="entry name" value="Nucleotidylyl transferase"/>
    <property type="match status" value="1"/>
</dbReference>
<organism>
    <name type="scientific">Escherichia coli O157:H7</name>
    <dbReference type="NCBI Taxonomy" id="83334"/>
    <lineage>
        <taxon>Bacteria</taxon>
        <taxon>Pseudomonadati</taxon>
        <taxon>Pseudomonadota</taxon>
        <taxon>Gammaproteobacteria</taxon>
        <taxon>Enterobacterales</taxon>
        <taxon>Enterobacteriaceae</taxon>
        <taxon>Escherichia</taxon>
    </lineage>
</organism>